<dbReference type="EC" id="3.1.26.4"/>
<dbReference type="EMBL" id="BC109682">
    <property type="protein sequence ID" value="AAI09683.1"/>
    <property type="molecule type" value="mRNA"/>
</dbReference>
<dbReference type="RefSeq" id="NP_001033623.1">
    <property type="nucleotide sequence ID" value="NM_001038534.2"/>
</dbReference>
<dbReference type="SMR" id="Q2TBT5"/>
<dbReference type="FunCoup" id="Q2TBT5">
    <property type="interactions" value="2018"/>
</dbReference>
<dbReference type="STRING" id="9913.ENSBTAP00000012731"/>
<dbReference type="PaxDb" id="9913-ENSBTAP00000012731"/>
<dbReference type="Ensembl" id="ENSBTAT00000012731.4">
    <property type="protein sequence ID" value="ENSBTAP00000012731.2"/>
    <property type="gene ID" value="ENSBTAG00000009661.4"/>
</dbReference>
<dbReference type="GeneID" id="512830"/>
<dbReference type="KEGG" id="bta:512830"/>
<dbReference type="CTD" id="10535"/>
<dbReference type="VEuPathDB" id="HostDB:ENSBTAG00000009661"/>
<dbReference type="VGNC" id="VGNC:34000">
    <property type="gene designation" value="RNASEH2A"/>
</dbReference>
<dbReference type="eggNOG" id="KOG2299">
    <property type="taxonomic scope" value="Eukaryota"/>
</dbReference>
<dbReference type="GeneTree" id="ENSGT00390000010768"/>
<dbReference type="HOGENOM" id="CLU_036532_0_3_1"/>
<dbReference type="InParanoid" id="Q2TBT5"/>
<dbReference type="OMA" id="REECRFF"/>
<dbReference type="OrthoDB" id="7462577at2759"/>
<dbReference type="TreeFam" id="TF314302"/>
<dbReference type="Proteomes" id="UP000009136">
    <property type="component" value="Chromosome 7"/>
</dbReference>
<dbReference type="Bgee" id="ENSBTAG00000009661">
    <property type="expression patterns" value="Expressed in spermatid and 109 other cell types or tissues"/>
</dbReference>
<dbReference type="GO" id="GO:0005829">
    <property type="term" value="C:cytosol"/>
    <property type="evidence" value="ECO:0007669"/>
    <property type="project" value="Ensembl"/>
</dbReference>
<dbReference type="GO" id="GO:0005654">
    <property type="term" value="C:nucleoplasm"/>
    <property type="evidence" value="ECO:0007669"/>
    <property type="project" value="Ensembl"/>
</dbReference>
<dbReference type="GO" id="GO:0032299">
    <property type="term" value="C:ribonuclease H2 complex"/>
    <property type="evidence" value="ECO:0000250"/>
    <property type="project" value="UniProtKB"/>
</dbReference>
<dbReference type="GO" id="GO:0046872">
    <property type="term" value="F:metal ion binding"/>
    <property type="evidence" value="ECO:0007669"/>
    <property type="project" value="UniProtKB-KW"/>
</dbReference>
<dbReference type="GO" id="GO:0003723">
    <property type="term" value="F:RNA binding"/>
    <property type="evidence" value="ECO:0007669"/>
    <property type="project" value="InterPro"/>
</dbReference>
<dbReference type="GO" id="GO:0004523">
    <property type="term" value="F:RNA-DNA hybrid ribonuclease activity"/>
    <property type="evidence" value="ECO:0000250"/>
    <property type="project" value="UniProtKB"/>
</dbReference>
<dbReference type="GO" id="GO:0043137">
    <property type="term" value="P:DNA replication, removal of RNA primer"/>
    <property type="evidence" value="ECO:0000318"/>
    <property type="project" value="GO_Central"/>
</dbReference>
<dbReference type="GO" id="GO:0006298">
    <property type="term" value="P:mismatch repair"/>
    <property type="evidence" value="ECO:0000318"/>
    <property type="project" value="GO_Central"/>
</dbReference>
<dbReference type="GO" id="GO:0006401">
    <property type="term" value="P:RNA catabolic process"/>
    <property type="evidence" value="ECO:0000250"/>
    <property type="project" value="UniProtKB"/>
</dbReference>
<dbReference type="CDD" id="cd07181">
    <property type="entry name" value="RNase_HII_eukaryota_like"/>
    <property type="match status" value="1"/>
</dbReference>
<dbReference type="FunFam" id="1.10.10.460:FF:000001">
    <property type="entry name" value="Ribonuclease"/>
    <property type="match status" value="1"/>
</dbReference>
<dbReference type="FunFam" id="3.30.420.10:FF:000016">
    <property type="entry name" value="Ribonuclease"/>
    <property type="match status" value="1"/>
</dbReference>
<dbReference type="Gene3D" id="3.30.420.10">
    <property type="entry name" value="Ribonuclease H-like superfamily/Ribonuclease H"/>
    <property type="match status" value="1"/>
</dbReference>
<dbReference type="Gene3D" id="1.10.10.460">
    <property type="entry name" value="Ribonuclease hii. Domain 2"/>
    <property type="match status" value="1"/>
</dbReference>
<dbReference type="InterPro" id="IPR004649">
    <property type="entry name" value="RNase_H2_suA"/>
</dbReference>
<dbReference type="InterPro" id="IPR001352">
    <property type="entry name" value="RNase_HII/HIII"/>
</dbReference>
<dbReference type="InterPro" id="IPR024567">
    <property type="entry name" value="RNase_HII/HIII_dom"/>
</dbReference>
<dbReference type="InterPro" id="IPR023160">
    <property type="entry name" value="RNase_HII_hlx-loop-hlx_cap_dom"/>
</dbReference>
<dbReference type="InterPro" id="IPR012337">
    <property type="entry name" value="RNaseH-like_sf"/>
</dbReference>
<dbReference type="InterPro" id="IPR036397">
    <property type="entry name" value="RNaseH_sf"/>
</dbReference>
<dbReference type="NCBIfam" id="TIGR00729">
    <property type="entry name" value="ribonuclease HII"/>
    <property type="match status" value="1"/>
</dbReference>
<dbReference type="PANTHER" id="PTHR10954">
    <property type="entry name" value="RIBONUCLEASE H2 SUBUNIT A"/>
    <property type="match status" value="1"/>
</dbReference>
<dbReference type="PANTHER" id="PTHR10954:SF7">
    <property type="entry name" value="RIBONUCLEASE H2 SUBUNIT A"/>
    <property type="match status" value="1"/>
</dbReference>
<dbReference type="Pfam" id="PF01351">
    <property type="entry name" value="RNase_HII"/>
    <property type="match status" value="1"/>
</dbReference>
<dbReference type="SUPFAM" id="SSF53098">
    <property type="entry name" value="Ribonuclease H-like"/>
    <property type="match status" value="1"/>
</dbReference>
<dbReference type="PROSITE" id="PS51975">
    <property type="entry name" value="RNASE_H_2"/>
    <property type="match status" value="1"/>
</dbReference>
<evidence type="ECO:0000250" key="1"/>
<evidence type="ECO:0000250" key="2">
    <source>
        <dbReference type="UniProtKB" id="O75792"/>
    </source>
</evidence>
<evidence type="ECO:0000250" key="3">
    <source>
        <dbReference type="UniProtKB" id="Q9CWY8"/>
    </source>
</evidence>
<evidence type="ECO:0000255" key="4">
    <source>
        <dbReference type="PROSITE-ProRule" id="PRU01319"/>
    </source>
</evidence>
<evidence type="ECO:0000256" key="5">
    <source>
        <dbReference type="SAM" id="MobiDB-lite"/>
    </source>
</evidence>
<evidence type="ECO:0000269" key="6">
    <source>
    </source>
</evidence>
<evidence type="ECO:0000305" key="7"/>
<sequence>MDLSELERDNTGRCRLSSPVPPVCLKEPCVLGVDEAGRGPVLGPMVYAICYCPLSRLEDLEALKVADSKTLSESERDRLFAKMEEDGDFVGWALDVLSPNLISTSMLGRVKYNLNALSHDTATGLVQFALDQGVNVAQVFVDTVGLPETYQERLQQRFPGIEVTVKAKADALYPVVSAASICAKVARDQAVKNWKFVEKLQDLDTDYGSGYPNDPKTKAWLRKHVDPVFGFPQFVRFSWRTAQSILESEAEDVKWEDSETGDPKGPGKIKSYFSESPQTCLRLPHRYFQERGLESATVL</sequence>
<feature type="chain" id="PRO_0000247321" description="Ribonuclease H2 subunit A">
    <location>
        <begin position="1"/>
        <end position="299"/>
    </location>
</feature>
<feature type="domain" description="RNase H type-2" evidence="4">
    <location>
        <begin position="28"/>
        <end position="251"/>
    </location>
</feature>
<feature type="region of interest" description="Disordered" evidence="5">
    <location>
        <begin position="250"/>
        <end position="272"/>
    </location>
</feature>
<feature type="binding site" evidence="1">
    <location>
        <position position="34"/>
    </location>
    <ligand>
        <name>a divalent metal cation</name>
        <dbReference type="ChEBI" id="CHEBI:60240"/>
    </ligand>
</feature>
<feature type="binding site" evidence="1">
    <location>
        <position position="35"/>
    </location>
    <ligand>
        <name>a divalent metal cation</name>
        <dbReference type="ChEBI" id="CHEBI:60240"/>
    </ligand>
</feature>
<feature type="binding site" evidence="1">
    <location>
        <position position="142"/>
    </location>
    <ligand>
        <name>a divalent metal cation</name>
        <dbReference type="ChEBI" id="CHEBI:60240"/>
    </ligand>
</feature>
<feature type="modified residue" description="N-acetylmethionine" evidence="2">
    <location>
        <position position="1"/>
    </location>
</feature>
<feature type="modified residue" description="Phosphothreonine" evidence="2">
    <location>
        <position position="205"/>
    </location>
</feature>
<feature type="modified residue" description="Phosphothreonine" evidence="2">
    <location>
        <position position="217"/>
    </location>
</feature>
<feature type="modified residue" description="Phosphoserine" evidence="3">
    <location>
        <position position="258"/>
    </location>
</feature>
<comment type="function">
    <text evidence="6">Catalytic subunit of RNase HII, an endonuclease that specifically degrades the RNA of RNA:DNA hybrids. Participates in DNA replication, possibly by mediating the removal of lagging-strand Okazaki fragment RNA primers during DNA replication. Mediates the excision of single ribonucleotides from DNA:RNA duplexes.</text>
</comment>
<comment type="catalytic activity">
    <reaction>
        <text>Endonucleolytic cleavage to 5'-phosphomonoester.</text>
        <dbReference type="EC" id="3.1.26.4"/>
    </reaction>
</comment>
<comment type="cofactor">
    <cofactor evidence="1">
        <name>Mn(2+)</name>
        <dbReference type="ChEBI" id="CHEBI:29035"/>
    </cofactor>
    <cofactor evidence="1">
        <name>Mg(2+)</name>
        <dbReference type="ChEBI" id="CHEBI:18420"/>
    </cofactor>
    <text evidence="1">Manganese or magnesium. Binds 1 divalent metal ion per monomer in the absence of substrate. May bind a second metal ion after substrate binding.</text>
</comment>
<comment type="subunit">
    <text evidence="1">The RNase H2 complex is a heterotrimer composed of the catalytic subunit RNASEH2A and the non-catalytic subunits RNASEH2B and RNASEH2C.</text>
</comment>
<comment type="subcellular location">
    <subcellularLocation>
        <location evidence="1">Nucleus</location>
    </subcellularLocation>
</comment>
<comment type="similarity">
    <text evidence="7">Belongs to the RNase HII family. Eukaryotic subfamily.</text>
</comment>
<gene>
    <name type="primary">RNASEH2A</name>
</gene>
<proteinExistence type="evidence at protein level"/>
<protein>
    <recommendedName>
        <fullName>Ribonuclease H2 subunit A</fullName>
        <shortName>RNase H2 subunit A</shortName>
        <ecNumber>3.1.26.4</ecNumber>
    </recommendedName>
    <alternativeName>
        <fullName>Ribonuclease HI large subunit</fullName>
        <shortName>RNase HI large subunit</shortName>
    </alternativeName>
    <alternativeName>
        <fullName>Ribonuclease HI subunit A</fullName>
    </alternativeName>
</protein>
<keyword id="KW-0007">Acetylation</keyword>
<keyword id="KW-0903">Direct protein sequencing</keyword>
<keyword id="KW-0255">Endonuclease</keyword>
<keyword id="KW-0378">Hydrolase</keyword>
<keyword id="KW-0479">Metal-binding</keyword>
<keyword id="KW-0540">Nuclease</keyword>
<keyword id="KW-0539">Nucleus</keyword>
<keyword id="KW-0597">Phosphoprotein</keyword>
<keyword id="KW-1185">Reference proteome</keyword>
<organism>
    <name type="scientific">Bos taurus</name>
    <name type="common">Bovine</name>
    <dbReference type="NCBI Taxonomy" id="9913"/>
    <lineage>
        <taxon>Eukaryota</taxon>
        <taxon>Metazoa</taxon>
        <taxon>Chordata</taxon>
        <taxon>Craniata</taxon>
        <taxon>Vertebrata</taxon>
        <taxon>Euteleostomi</taxon>
        <taxon>Mammalia</taxon>
        <taxon>Eutheria</taxon>
        <taxon>Laurasiatheria</taxon>
        <taxon>Artiodactyla</taxon>
        <taxon>Ruminantia</taxon>
        <taxon>Pecora</taxon>
        <taxon>Bovidae</taxon>
        <taxon>Bovinae</taxon>
        <taxon>Bos</taxon>
    </lineage>
</organism>
<name>RNH2A_BOVIN</name>
<accession>Q2TBT5</accession>
<reference key="1">
    <citation type="submission" date="2005-11" db="EMBL/GenBank/DDBJ databases">
        <authorList>
            <consortium name="NIH - Mammalian Gene Collection (MGC) project"/>
        </authorList>
    </citation>
    <scope>NUCLEOTIDE SEQUENCE [LARGE SCALE MRNA]</scope>
    <source>
        <strain>Crossbred X Angus</strain>
        <tissue>Liver</tissue>
    </source>
</reference>
<reference key="2">
    <citation type="journal article" date="1998" name="Proc. Natl. Acad. Sci. U.S.A.">
        <title>Cloning of the cDNA encoding the large subunit of human RNase HI, a homologue of the prokaryotic RNase HII.</title>
        <authorList>
            <person name="Frank P."/>
            <person name="Braunshofer-Reiter C."/>
            <person name="Wintersberger U."/>
            <person name="Grimm R."/>
            <person name="Buesen W."/>
        </authorList>
    </citation>
    <scope>PROTEIN SEQUENCE OF 57-62; 158-165; 224-235; 241-247 AND 292-297</scope>
    <scope>FUNCTION</scope>
</reference>